<comment type="function">
    <text evidence="1">May act as a substrate-specific adapter of an E3 ubiquitin-protein ligase complex (CUL3-RBX1-BTB) which mediates the ubiquitination and subsequent proteasomal degradation of target proteins.</text>
</comment>
<comment type="pathway">
    <text>Protein modification; protein ubiquitination.</text>
</comment>
<comment type="domain">
    <text evidence="3">The BTB/POZ domain mediates the interaction with some component of ubiquitin ligase complexes.</text>
</comment>
<comment type="sequence caution" evidence="4">
    <conflict type="erroneous initiation">
        <sequence resource="EMBL-CDS" id="AAM62951"/>
    </conflict>
    <text>Truncated N-terminus.</text>
</comment>
<dbReference type="EMBL" id="AC006436">
    <property type="protein sequence ID" value="AAD28312.2"/>
    <property type="molecule type" value="Genomic_DNA"/>
</dbReference>
<dbReference type="EMBL" id="AC007063">
    <property type="protein sequence ID" value="AAM15372.1"/>
    <property type="molecule type" value="Genomic_DNA"/>
</dbReference>
<dbReference type="EMBL" id="CP002685">
    <property type="protein sequence ID" value="AEC06255.1"/>
    <property type="molecule type" value="Genomic_DNA"/>
</dbReference>
<dbReference type="EMBL" id="AK117606">
    <property type="protein sequence ID" value="BAC42262.2"/>
    <property type="molecule type" value="mRNA"/>
</dbReference>
<dbReference type="EMBL" id="BT029302">
    <property type="protein sequence ID" value="ABK32116.1"/>
    <property type="molecule type" value="mRNA"/>
</dbReference>
<dbReference type="EMBL" id="AY085733">
    <property type="protein sequence ID" value="AAM62951.1"/>
    <property type="status" value="ALT_INIT"/>
    <property type="molecule type" value="mRNA"/>
</dbReference>
<dbReference type="EMBL" id="AF315734">
    <property type="protein sequence ID" value="AAG31650.1"/>
    <property type="molecule type" value="mRNA"/>
</dbReference>
<dbReference type="PIR" id="H84509">
    <property type="entry name" value="H84509"/>
</dbReference>
<dbReference type="RefSeq" id="NP_565358.1">
    <property type="nucleotide sequence ID" value="NM_126948.2"/>
</dbReference>
<dbReference type="FunCoup" id="Q9SKH2">
    <property type="interactions" value="1301"/>
</dbReference>
<dbReference type="STRING" id="3702.Q9SKH2"/>
<dbReference type="iPTMnet" id="Q9SKH2"/>
<dbReference type="PaxDb" id="3702-AT2G13690.1"/>
<dbReference type="ProteomicsDB" id="242364"/>
<dbReference type="EnsemblPlants" id="AT2G13690.1">
    <property type="protein sequence ID" value="AT2G13690.1"/>
    <property type="gene ID" value="AT2G13690"/>
</dbReference>
<dbReference type="GeneID" id="815853"/>
<dbReference type="Gramene" id="AT2G13690.1">
    <property type="protein sequence ID" value="AT2G13690.1"/>
    <property type="gene ID" value="AT2G13690"/>
</dbReference>
<dbReference type="KEGG" id="ath:AT2G13690"/>
<dbReference type="Araport" id="AT2G13690"/>
<dbReference type="TAIR" id="AT2G13690"/>
<dbReference type="eggNOG" id="ENOG502QV9R">
    <property type="taxonomic scope" value="Eukaryota"/>
</dbReference>
<dbReference type="HOGENOM" id="CLU_025834_0_1_1"/>
<dbReference type="InParanoid" id="Q9SKH2"/>
<dbReference type="OMA" id="IMIDREI"/>
<dbReference type="PhylomeDB" id="Q9SKH2"/>
<dbReference type="UniPathway" id="UPA00143"/>
<dbReference type="PRO" id="PR:Q9SKH2"/>
<dbReference type="Proteomes" id="UP000006548">
    <property type="component" value="Chromosome 2"/>
</dbReference>
<dbReference type="ExpressionAtlas" id="Q9SKH2">
    <property type="expression patterns" value="baseline and differential"/>
</dbReference>
<dbReference type="GO" id="GO:0016567">
    <property type="term" value="P:protein ubiquitination"/>
    <property type="evidence" value="ECO:0007669"/>
    <property type="project" value="UniProtKB-UniPathway"/>
</dbReference>
<dbReference type="InterPro" id="IPR038920">
    <property type="entry name" value="BTB/POZ_dom_prot"/>
</dbReference>
<dbReference type="PANTHER" id="PTHR31060:SF33">
    <property type="entry name" value="OS04G0278000 PROTEIN"/>
    <property type="match status" value="1"/>
</dbReference>
<dbReference type="PANTHER" id="PTHR31060">
    <property type="entry name" value="OSJNBA0011J08.25 PROTEIN-RELATED"/>
    <property type="match status" value="1"/>
</dbReference>
<keyword id="KW-1185">Reference proteome</keyword>
<keyword id="KW-0833">Ubl conjugation pathway</keyword>
<proteinExistence type="evidence at transcript level"/>
<sequence>MTMGDSDLRKPTNFGTGHLSRRRSWCCSFAVPPASPDTRSISSRNHIPAKSQQQRPKLVPCSPQSSKSALNIVNRIDPRRILSPGRVSPIDSDPTVTTMQETETTQEEEDDAVVVDSTPNLRSESFRAPKIEVTGSGLSEGYDARLSLKGRNGGGVLVLELSLEVLAANSDVFSGLIAEEKKCSSSSSSLGLKNTCRIEVCDVENLGVFRETVELMFEESNVIIKKFMTMGVYRAIDVLEVAAGIKFSRAVLSCLKYLEAVPWTEDEEEKLRRLLGIYSFDDDAVSEILARFNSNETENLQDSLSKKLVWSITSCSDVNPRNELKSLVKGLLCKSSVYEKEQPEINKEDIYRAGKCCVDSLAKLFEEGSSSSSSKKEKPLIESISREVENINWLLEIMIDREIAEEFVEIWGKQRRLVEMHERVSPMVRYEVSRVTGAIFIAMGKRRVQCGGEARAGLVEAWFKPMLVDFGWLQRCKKGLDMREVEEGMGQTLLTLPVKEQYQVFMEWFRWFSKHGTECPNLSKAFQIWWRRSFLRGVESSTCR</sequence>
<evidence type="ECO:0000250" key="1"/>
<evidence type="ECO:0000256" key="2">
    <source>
        <dbReference type="SAM" id="MobiDB-lite"/>
    </source>
</evidence>
<evidence type="ECO:0000269" key="3">
    <source>
    </source>
</evidence>
<evidence type="ECO:0000305" key="4"/>
<accession>Q9SKH2</accession>
<accession>Q7FM55</accession>
<accession>Q8LDX9</accession>
<accession>Q9FUB3</accession>
<reference key="1">
    <citation type="journal article" date="1999" name="Nature">
        <title>Sequence and analysis of chromosome 2 of the plant Arabidopsis thaliana.</title>
        <authorList>
            <person name="Lin X."/>
            <person name="Kaul S."/>
            <person name="Rounsley S.D."/>
            <person name="Shea T.P."/>
            <person name="Benito M.-I."/>
            <person name="Town C.D."/>
            <person name="Fujii C.Y."/>
            <person name="Mason T.M."/>
            <person name="Bowman C.L."/>
            <person name="Barnstead M.E."/>
            <person name="Feldblyum T.V."/>
            <person name="Buell C.R."/>
            <person name="Ketchum K.A."/>
            <person name="Lee J.J."/>
            <person name="Ronning C.M."/>
            <person name="Koo H.L."/>
            <person name="Moffat K.S."/>
            <person name="Cronin L.A."/>
            <person name="Shen M."/>
            <person name="Pai G."/>
            <person name="Van Aken S."/>
            <person name="Umayam L."/>
            <person name="Tallon L.J."/>
            <person name="Gill J.E."/>
            <person name="Adams M.D."/>
            <person name="Carrera A.J."/>
            <person name="Creasy T.H."/>
            <person name="Goodman H.M."/>
            <person name="Somerville C.R."/>
            <person name="Copenhaver G.P."/>
            <person name="Preuss D."/>
            <person name="Nierman W.C."/>
            <person name="White O."/>
            <person name="Eisen J.A."/>
            <person name="Salzberg S.L."/>
            <person name="Fraser C.M."/>
            <person name="Venter J.C."/>
        </authorList>
    </citation>
    <scope>NUCLEOTIDE SEQUENCE [LARGE SCALE GENOMIC DNA]</scope>
    <source>
        <strain>cv. Columbia</strain>
    </source>
</reference>
<reference key="2">
    <citation type="journal article" date="2017" name="Plant J.">
        <title>Araport11: a complete reannotation of the Arabidopsis thaliana reference genome.</title>
        <authorList>
            <person name="Cheng C.Y."/>
            <person name="Krishnakumar V."/>
            <person name="Chan A.P."/>
            <person name="Thibaud-Nissen F."/>
            <person name="Schobel S."/>
            <person name="Town C.D."/>
        </authorList>
    </citation>
    <scope>GENOME REANNOTATION</scope>
    <source>
        <strain>cv. Columbia</strain>
    </source>
</reference>
<reference key="3">
    <citation type="journal article" date="2002" name="Science">
        <title>Functional annotation of a full-length Arabidopsis cDNA collection.</title>
        <authorList>
            <person name="Seki M."/>
            <person name="Narusaka M."/>
            <person name="Kamiya A."/>
            <person name="Ishida J."/>
            <person name="Satou M."/>
            <person name="Sakurai T."/>
            <person name="Nakajima M."/>
            <person name="Enju A."/>
            <person name="Akiyama K."/>
            <person name="Oono Y."/>
            <person name="Muramatsu M."/>
            <person name="Hayashizaki Y."/>
            <person name="Kawai J."/>
            <person name="Carninci P."/>
            <person name="Itoh M."/>
            <person name="Ishii Y."/>
            <person name="Arakawa T."/>
            <person name="Shibata K."/>
            <person name="Shinagawa A."/>
            <person name="Shinozaki K."/>
        </authorList>
    </citation>
    <scope>NUCLEOTIDE SEQUENCE [LARGE SCALE MRNA]</scope>
    <source>
        <strain>cv. Columbia</strain>
    </source>
</reference>
<reference key="4">
    <citation type="submission" date="2006-11" db="EMBL/GenBank/DDBJ databases">
        <title>Arabidopsis ORF Clones.</title>
        <authorList>
            <person name="Bautista V.R."/>
            <person name="Kim C.J."/>
            <person name="Chen H."/>
            <person name="Quinitio C."/>
            <person name="Ecker J.R."/>
        </authorList>
    </citation>
    <scope>NUCLEOTIDE SEQUENCE [LARGE SCALE MRNA]</scope>
    <source>
        <strain>cv. Columbia</strain>
    </source>
</reference>
<reference key="5">
    <citation type="submission" date="2002-03" db="EMBL/GenBank/DDBJ databases">
        <title>Full-length cDNA from Arabidopsis thaliana.</title>
        <authorList>
            <person name="Brover V.V."/>
            <person name="Troukhan M.E."/>
            <person name="Alexandrov N.A."/>
            <person name="Lu Y.-P."/>
            <person name="Flavell R.B."/>
            <person name="Feldmann K.A."/>
        </authorList>
    </citation>
    <scope>NUCLEOTIDE SEQUENCE [LARGE SCALE MRNA]</scope>
</reference>
<reference key="6">
    <citation type="journal article" date="1998" name="Genes Dev.">
        <title>Pleiotropic control of glucose and hormone responses by PRL1, a nuclear WD protein, in Arabidopsis.</title>
        <authorList>
            <person name="Nemeth K."/>
            <person name="Salchert K."/>
            <person name="Putnoky P."/>
            <person name="Bhalerao R."/>
            <person name="Koncz-Kalman Z."/>
            <person name="Stankovic-Stangeland B."/>
            <person name="Bako L."/>
            <person name="Mathur J."/>
            <person name="Oekresz L."/>
            <person name="Stabel S."/>
            <person name="Geigenberger P."/>
            <person name="Stitt M."/>
            <person name="Redei G.P."/>
            <person name="Schell J."/>
            <person name="Koncz C."/>
        </authorList>
    </citation>
    <scope>NUCLEOTIDE SEQUENCE [MRNA] OF 322-544</scope>
</reference>
<reference key="7">
    <citation type="journal article" date="2005" name="J. Biol. Chem.">
        <title>Cullins 3a and 3b assemble with members of the broad complex/tramtrack/bric-a-brac (BTB) protein family to form essential ubiquitin-protein ligases (E3s) in Arabidopsis.</title>
        <authorList>
            <person name="Gingerich D.J."/>
            <person name="Gagne J.M."/>
            <person name="Salter D.W."/>
            <person name="Hellmann H."/>
            <person name="Estelle M."/>
            <person name="Ma L."/>
            <person name="Vierstra R.D."/>
        </authorList>
    </citation>
    <scope>DOMAIN BTB</scope>
</reference>
<feature type="chain" id="PRO_0000408528" description="BTB/POZ domain-containing protein At2g13690">
    <location>
        <begin position="1"/>
        <end position="544"/>
    </location>
</feature>
<feature type="domain" description="BTB">
    <location>
        <begin position="142"/>
        <end position="225"/>
    </location>
</feature>
<feature type="region of interest" description="Disordered" evidence="2">
    <location>
        <begin position="34"/>
        <end position="66"/>
    </location>
</feature>
<feature type="region of interest" description="Disordered" evidence="2">
    <location>
        <begin position="82"/>
        <end position="111"/>
    </location>
</feature>
<feature type="compositionally biased region" description="Polar residues" evidence="2">
    <location>
        <begin position="37"/>
        <end position="55"/>
    </location>
</feature>
<feature type="compositionally biased region" description="Low complexity" evidence="2">
    <location>
        <begin position="93"/>
        <end position="103"/>
    </location>
</feature>
<feature type="sequence conflict" description="In Ref. 5; AAM62951." evidence="4" ref="5">
    <original>T</original>
    <variation>A</variation>
    <location>
        <position position="38"/>
    </location>
</feature>
<feature type="sequence conflict" description="In Ref. 5; AAM62951." evidence="4" ref="5">
    <original>V</original>
    <variation>F</variation>
    <location>
        <position position="96"/>
    </location>
</feature>
<feature type="sequence conflict" description="In Ref. 5; AAM62951." evidence="4" ref="5">
    <original>TE</original>
    <variation>AD</variation>
    <location>
        <begin position="102"/>
        <end position="103"/>
    </location>
</feature>
<feature type="sequence conflict" description="In Ref. 5; AAM62951." evidence="4" ref="5">
    <original>F</original>
    <variation>Y</variation>
    <location>
        <position position="126"/>
    </location>
</feature>
<feature type="sequence conflict" description="In Ref. 5; AAM62951." evidence="4" ref="5">
    <original>L</original>
    <variation>S</variation>
    <location>
        <position position="163"/>
    </location>
</feature>
<feature type="sequence conflict" description="In Ref. 5; AAM62951." evidence="4" ref="5">
    <original>C</original>
    <variation>CS</variation>
    <location>
        <position position="183"/>
    </location>
</feature>
<feature type="sequence conflict" description="In Ref. 3; BAC42262." evidence="4" ref="3">
    <original>L</original>
    <variation>R</variation>
    <location>
        <position position="206"/>
    </location>
</feature>
<feature type="sequence conflict" description="In Ref. 5; AAM62951." evidence="4" ref="5">
    <original>T</original>
    <variation>K</variation>
    <location>
        <position position="229"/>
    </location>
</feature>
<feature type="sequence conflict" description="In Ref. 5; AAM62951." evidence="4" ref="5">
    <original>A</original>
    <variation>T</variation>
    <location>
        <position position="243"/>
    </location>
</feature>
<feature type="sequence conflict" description="In Ref. 5; AAM62951." evidence="4" ref="5">
    <original>D</original>
    <variation>A</variation>
    <location>
        <position position="283"/>
    </location>
</feature>
<feature type="sequence conflict" description="In Ref. 5; AAM62951." evidence="4" ref="5">
    <original>L</original>
    <variation>S</variation>
    <location>
        <position position="300"/>
    </location>
</feature>
<feature type="sequence conflict" description="In Ref. 5; AAM62951." evidence="4" ref="5">
    <original>K</original>
    <variation>N</variation>
    <location>
        <position position="375"/>
    </location>
</feature>
<feature type="sequence conflict" description="In Ref. 5; AAM62951." evidence="4" ref="5">
    <original>A</original>
    <variation>V</variation>
    <location>
        <position position="461"/>
    </location>
</feature>
<feature type="sequence conflict" description="In Ref. 5; AAM62951." evidence="4" ref="5">
    <original>E</original>
    <variation>Q</variation>
    <location>
        <position position="500"/>
    </location>
</feature>
<feature type="sequence conflict" description="In Ref. 6; AAG31650." evidence="4" ref="6">
    <original>S</original>
    <variation>P</variation>
    <location>
        <position position="513"/>
    </location>
</feature>
<gene>
    <name type="primary">PRL1-IFG</name>
    <name type="ordered locus">At2g13690</name>
    <name type="ORF">F13J11</name>
    <name type="ORF">T10F5.21</name>
</gene>
<name>Y2369_ARATH</name>
<protein>
    <recommendedName>
        <fullName>BTB/POZ domain-containing protein At2g13690</fullName>
    </recommendedName>
    <alternativeName>
        <fullName>Protein PRL1-interacting factor G</fullName>
    </alternativeName>
</protein>
<organism>
    <name type="scientific">Arabidopsis thaliana</name>
    <name type="common">Mouse-ear cress</name>
    <dbReference type="NCBI Taxonomy" id="3702"/>
    <lineage>
        <taxon>Eukaryota</taxon>
        <taxon>Viridiplantae</taxon>
        <taxon>Streptophyta</taxon>
        <taxon>Embryophyta</taxon>
        <taxon>Tracheophyta</taxon>
        <taxon>Spermatophyta</taxon>
        <taxon>Magnoliopsida</taxon>
        <taxon>eudicotyledons</taxon>
        <taxon>Gunneridae</taxon>
        <taxon>Pentapetalae</taxon>
        <taxon>rosids</taxon>
        <taxon>malvids</taxon>
        <taxon>Brassicales</taxon>
        <taxon>Brassicaceae</taxon>
        <taxon>Camelineae</taxon>
        <taxon>Arabidopsis</taxon>
    </lineage>
</organism>